<name>GPDA_PSE14</name>
<evidence type="ECO:0000255" key="1">
    <source>
        <dbReference type="HAMAP-Rule" id="MF_00394"/>
    </source>
</evidence>
<sequence>MTTQQPVAVLGGGSFGTAIANLLAENGHQVLQWMRDPEQAQAIRVNRENPRYLKGIKVRPEVEPVTDITATLEACELIFVALPSSALRAVLSPHVERLNGKMLVSLTKGIEAQSFKLMSQILEEIVPQARIGVLSGPNLAREIAEHALTATVVASEDEALCQQVQAALHGRTFRVYASNDRFGVELGGALKNVYAIIAGMAVALDMGENTKSMLITRALAEMTRFAVSQGANPMTFLGLAGVGDLIVTCSSPKSRNYQVGFALGQGLTLEAAVTRLGEVAEGVNTLKVLKVKAQEVQVYMPLVAGLHAILFEGRTLSQVIEALMRAEPKTDVDFISITGFN</sequence>
<organism>
    <name type="scientific">Pseudomonas savastanoi pv. phaseolicola (strain 1448A / Race 6)</name>
    <name type="common">Pseudomonas syringae pv. phaseolicola (strain 1448A / Race 6)</name>
    <dbReference type="NCBI Taxonomy" id="264730"/>
    <lineage>
        <taxon>Bacteria</taxon>
        <taxon>Pseudomonadati</taxon>
        <taxon>Pseudomonadota</taxon>
        <taxon>Gammaproteobacteria</taxon>
        <taxon>Pseudomonadales</taxon>
        <taxon>Pseudomonadaceae</taxon>
        <taxon>Pseudomonas</taxon>
    </lineage>
</organism>
<proteinExistence type="inferred from homology"/>
<reference key="1">
    <citation type="journal article" date="2005" name="J. Bacteriol.">
        <title>Whole-genome sequence analysis of Pseudomonas syringae pv. phaseolicola 1448A reveals divergence among pathovars in genes involved in virulence and transposition.</title>
        <authorList>
            <person name="Joardar V."/>
            <person name="Lindeberg M."/>
            <person name="Jackson R.W."/>
            <person name="Selengut J."/>
            <person name="Dodson R."/>
            <person name="Brinkac L.M."/>
            <person name="Daugherty S.C."/>
            <person name="DeBoy R.T."/>
            <person name="Durkin A.S."/>
            <person name="Gwinn Giglio M."/>
            <person name="Madupu R."/>
            <person name="Nelson W.C."/>
            <person name="Rosovitz M.J."/>
            <person name="Sullivan S.A."/>
            <person name="Crabtree J."/>
            <person name="Creasy T."/>
            <person name="Davidsen T.M."/>
            <person name="Haft D.H."/>
            <person name="Zafar N."/>
            <person name="Zhou L."/>
            <person name="Halpin R."/>
            <person name="Holley T."/>
            <person name="Khouri H.M."/>
            <person name="Feldblyum T.V."/>
            <person name="White O."/>
            <person name="Fraser C.M."/>
            <person name="Chatterjee A.K."/>
            <person name="Cartinhour S."/>
            <person name="Schneider D."/>
            <person name="Mansfield J.W."/>
            <person name="Collmer A."/>
            <person name="Buell R."/>
        </authorList>
    </citation>
    <scope>NUCLEOTIDE SEQUENCE [LARGE SCALE GENOMIC DNA]</scope>
    <source>
        <strain>1448A / Race 6</strain>
    </source>
</reference>
<comment type="function">
    <text evidence="1">Catalyzes the reduction of the glycolytic intermediate dihydroxyacetone phosphate (DHAP) to sn-glycerol 3-phosphate (G3P), the key precursor for phospholipid synthesis.</text>
</comment>
<comment type="catalytic activity">
    <reaction evidence="1">
        <text>sn-glycerol 3-phosphate + NAD(+) = dihydroxyacetone phosphate + NADH + H(+)</text>
        <dbReference type="Rhea" id="RHEA:11092"/>
        <dbReference type="ChEBI" id="CHEBI:15378"/>
        <dbReference type="ChEBI" id="CHEBI:57540"/>
        <dbReference type="ChEBI" id="CHEBI:57597"/>
        <dbReference type="ChEBI" id="CHEBI:57642"/>
        <dbReference type="ChEBI" id="CHEBI:57945"/>
        <dbReference type="EC" id="1.1.1.94"/>
    </reaction>
    <physiologicalReaction direction="right-to-left" evidence="1">
        <dbReference type="Rhea" id="RHEA:11094"/>
    </physiologicalReaction>
</comment>
<comment type="catalytic activity">
    <reaction evidence="1">
        <text>sn-glycerol 3-phosphate + NADP(+) = dihydroxyacetone phosphate + NADPH + H(+)</text>
        <dbReference type="Rhea" id="RHEA:11096"/>
        <dbReference type="ChEBI" id="CHEBI:15378"/>
        <dbReference type="ChEBI" id="CHEBI:57597"/>
        <dbReference type="ChEBI" id="CHEBI:57642"/>
        <dbReference type="ChEBI" id="CHEBI:57783"/>
        <dbReference type="ChEBI" id="CHEBI:58349"/>
        <dbReference type="EC" id="1.1.1.94"/>
    </reaction>
    <physiologicalReaction direction="right-to-left" evidence="1">
        <dbReference type="Rhea" id="RHEA:11098"/>
    </physiologicalReaction>
</comment>
<comment type="pathway">
    <text evidence="1">Membrane lipid metabolism; glycerophospholipid metabolism.</text>
</comment>
<comment type="subcellular location">
    <subcellularLocation>
        <location evidence="1">Cytoplasm</location>
    </subcellularLocation>
</comment>
<comment type="similarity">
    <text evidence="1">Belongs to the NAD-dependent glycerol-3-phosphate dehydrogenase family.</text>
</comment>
<keyword id="KW-0963">Cytoplasm</keyword>
<keyword id="KW-0444">Lipid biosynthesis</keyword>
<keyword id="KW-0443">Lipid metabolism</keyword>
<keyword id="KW-0520">NAD</keyword>
<keyword id="KW-0521">NADP</keyword>
<keyword id="KW-0547">Nucleotide-binding</keyword>
<keyword id="KW-0560">Oxidoreductase</keyword>
<keyword id="KW-0594">Phospholipid biosynthesis</keyword>
<keyword id="KW-1208">Phospholipid metabolism</keyword>
<gene>
    <name evidence="1" type="primary">gpsA</name>
    <name type="ordered locus">PSPPH_1994</name>
</gene>
<protein>
    <recommendedName>
        <fullName evidence="1">Glycerol-3-phosphate dehydrogenase [NAD(P)+]</fullName>
        <ecNumber evidence="1">1.1.1.94</ecNumber>
    </recommendedName>
    <alternativeName>
        <fullName evidence="1">NAD(P)(+)-dependent glycerol-3-phosphate dehydrogenase</fullName>
    </alternativeName>
    <alternativeName>
        <fullName evidence="1">NAD(P)H-dependent dihydroxyacetone-phosphate reductase</fullName>
    </alternativeName>
</protein>
<dbReference type="EC" id="1.1.1.94" evidence="1"/>
<dbReference type="EMBL" id="CP000058">
    <property type="protein sequence ID" value="AAZ36831.1"/>
    <property type="molecule type" value="Genomic_DNA"/>
</dbReference>
<dbReference type="RefSeq" id="WP_004658923.1">
    <property type="nucleotide sequence ID" value="NC_005773.3"/>
</dbReference>
<dbReference type="SMR" id="Q48K59"/>
<dbReference type="KEGG" id="psp:PSPPH_1994"/>
<dbReference type="eggNOG" id="COG0240">
    <property type="taxonomic scope" value="Bacteria"/>
</dbReference>
<dbReference type="HOGENOM" id="CLU_033449_0_2_6"/>
<dbReference type="UniPathway" id="UPA00940"/>
<dbReference type="Proteomes" id="UP000000551">
    <property type="component" value="Chromosome"/>
</dbReference>
<dbReference type="GO" id="GO:0005829">
    <property type="term" value="C:cytosol"/>
    <property type="evidence" value="ECO:0007669"/>
    <property type="project" value="TreeGrafter"/>
</dbReference>
<dbReference type="GO" id="GO:0047952">
    <property type="term" value="F:glycerol-3-phosphate dehydrogenase [NAD(P)+] activity"/>
    <property type="evidence" value="ECO:0007669"/>
    <property type="project" value="UniProtKB-UniRule"/>
</dbReference>
<dbReference type="GO" id="GO:0051287">
    <property type="term" value="F:NAD binding"/>
    <property type="evidence" value="ECO:0007669"/>
    <property type="project" value="InterPro"/>
</dbReference>
<dbReference type="GO" id="GO:0005975">
    <property type="term" value="P:carbohydrate metabolic process"/>
    <property type="evidence" value="ECO:0007669"/>
    <property type="project" value="InterPro"/>
</dbReference>
<dbReference type="GO" id="GO:0046167">
    <property type="term" value="P:glycerol-3-phosphate biosynthetic process"/>
    <property type="evidence" value="ECO:0007669"/>
    <property type="project" value="UniProtKB-UniRule"/>
</dbReference>
<dbReference type="GO" id="GO:0046168">
    <property type="term" value="P:glycerol-3-phosphate catabolic process"/>
    <property type="evidence" value="ECO:0007669"/>
    <property type="project" value="InterPro"/>
</dbReference>
<dbReference type="GO" id="GO:0046474">
    <property type="term" value="P:glycerophospholipid biosynthetic process"/>
    <property type="evidence" value="ECO:0007669"/>
    <property type="project" value="TreeGrafter"/>
</dbReference>
<dbReference type="FunFam" id="1.10.1040.10:FF:000001">
    <property type="entry name" value="Glycerol-3-phosphate dehydrogenase [NAD(P)+]"/>
    <property type="match status" value="1"/>
</dbReference>
<dbReference type="FunFam" id="3.40.50.720:FF:000019">
    <property type="entry name" value="Glycerol-3-phosphate dehydrogenase [NAD(P)+]"/>
    <property type="match status" value="1"/>
</dbReference>
<dbReference type="Gene3D" id="1.10.1040.10">
    <property type="entry name" value="N-(1-d-carboxylethyl)-l-norvaline Dehydrogenase, domain 2"/>
    <property type="match status" value="1"/>
</dbReference>
<dbReference type="Gene3D" id="3.40.50.720">
    <property type="entry name" value="NAD(P)-binding Rossmann-like Domain"/>
    <property type="match status" value="1"/>
</dbReference>
<dbReference type="HAMAP" id="MF_00394">
    <property type="entry name" value="NAD_Glyc3P_dehydrog"/>
    <property type="match status" value="1"/>
</dbReference>
<dbReference type="InterPro" id="IPR008927">
    <property type="entry name" value="6-PGluconate_DH-like_C_sf"/>
</dbReference>
<dbReference type="InterPro" id="IPR013328">
    <property type="entry name" value="6PGD_dom2"/>
</dbReference>
<dbReference type="InterPro" id="IPR006168">
    <property type="entry name" value="G3P_DH_NAD-dep"/>
</dbReference>
<dbReference type="InterPro" id="IPR006109">
    <property type="entry name" value="G3P_DH_NAD-dep_C"/>
</dbReference>
<dbReference type="InterPro" id="IPR011128">
    <property type="entry name" value="G3P_DH_NAD-dep_N"/>
</dbReference>
<dbReference type="InterPro" id="IPR036291">
    <property type="entry name" value="NAD(P)-bd_dom_sf"/>
</dbReference>
<dbReference type="NCBIfam" id="NF000940">
    <property type="entry name" value="PRK00094.1-2"/>
    <property type="match status" value="1"/>
</dbReference>
<dbReference type="NCBIfam" id="NF000942">
    <property type="entry name" value="PRK00094.1-4"/>
    <property type="match status" value="1"/>
</dbReference>
<dbReference type="NCBIfam" id="NF000946">
    <property type="entry name" value="PRK00094.2-4"/>
    <property type="match status" value="1"/>
</dbReference>
<dbReference type="PANTHER" id="PTHR11728">
    <property type="entry name" value="GLYCEROL-3-PHOSPHATE DEHYDROGENASE"/>
    <property type="match status" value="1"/>
</dbReference>
<dbReference type="PANTHER" id="PTHR11728:SF1">
    <property type="entry name" value="GLYCEROL-3-PHOSPHATE DEHYDROGENASE [NAD(+)] 2, CHLOROPLASTIC"/>
    <property type="match status" value="1"/>
</dbReference>
<dbReference type="Pfam" id="PF07479">
    <property type="entry name" value="NAD_Gly3P_dh_C"/>
    <property type="match status" value="1"/>
</dbReference>
<dbReference type="Pfam" id="PF01210">
    <property type="entry name" value="NAD_Gly3P_dh_N"/>
    <property type="match status" value="1"/>
</dbReference>
<dbReference type="PIRSF" id="PIRSF000114">
    <property type="entry name" value="Glycerol-3-P_dh"/>
    <property type="match status" value="1"/>
</dbReference>
<dbReference type="PRINTS" id="PR00077">
    <property type="entry name" value="GPDHDRGNASE"/>
</dbReference>
<dbReference type="SUPFAM" id="SSF48179">
    <property type="entry name" value="6-phosphogluconate dehydrogenase C-terminal domain-like"/>
    <property type="match status" value="1"/>
</dbReference>
<dbReference type="SUPFAM" id="SSF51735">
    <property type="entry name" value="NAD(P)-binding Rossmann-fold domains"/>
    <property type="match status" value="1"/>
</dbReference>
<dbReference type="PROSITE" id="PS00957">
    <property type="entry name" value="NAD_G3PDH"/>
    <property type="match status" value="1"/>
</dbReference>
<feature type="chain" id="PRO_0000255346" description="Glycerol-3-phosphate dehydrogenase [NAD(P)+]">
    <location>
        <begin position="1"/>
        <end position="341"/>
    </location>
</feature>
<feature type="active site" description="Proton acceptor" evidence="1">
    <location>
        <position position="191"/>
    </location>
</feature>
<feature type="binding site" evidence="1">
    <location>
        <position position="14"/>
    </location>
    <ligand>
        <name>NADPH</name>
        <dbReference type="ChEBI" id="CHEBI:57783"/>
    </ligand>
</feature>
<feature type="binding site" evidence="1">
    <location>
        <position position="15"/>
    </location>
    <ligand>
        <name>NADPH</name>
        <dbReference type="ChEBI" id="CHEBI:57783"/>
    </ligand>
</feature>
<feature type="binding site" evidence="1">
    <location>
        <position position="35"/>
    </location>
    <ligand>
        <name>NADPH</name>
        <dbReference type="ChEBI" id="CHEBI:57783"/>
    </ligand>
</feature>
<feature type="binding site" evidence="1">
    <location>
        <position position="108"/>
    </location>
    <ligand>
        <name>NADPH</name>
        <dbReference type="ChEBI" id="CHEBI:57783"/>
    </ligand>
</feature>
<feature type="binding site" evidence="1">
    <location>
        <position position="108"/>
    </location>
    <ligand>
        <name>sn-glycerol 3-phosphate</name>
        <dbReference type="ChEBI" id="CHEBI:57597"/>
    </ligand>
</feature>
<feature type="binding site" evidence="1">
    <location>
        <position position="136"/>
    </location>
    <ligand>
        <name>sn-glycerol 3-phosphate</name>
        <dbReference type="ChEBI" id="CHEBI:57597"/>
    </ligand>
</feature>
<feature type="binding site" evidence="1">
    <location>
        <position position="140"/>
    </location>
    <ligand>
        <name>NADPH</name>
        <dbReference type="ChEBI" id="CHEBI:57783"/>
    </ligand>
</feature>
<feature type="binding site" evidence="1">
    <location>
        <position position="191"/>
    </location>
    <ligand>
        <name>sn-glycerol 3-phosphate</name>
        <dbReference type="ChEBI" id="CHEBI:57597"/>
    </ligand>
</feature>
<feature type="binding site" evidence="1">
    <location>
        <position position="244"/>
    </location>
    <ligand>
        <name>sn-glycerol 3-phosphate</name>
        <dbReference type="ChEBI" id="CHEBI:57597"/>
    </ligand>
</feature>
<feature type="binding site" evidence="1">
    <location>
        <position position="254"/>
    </location>
    <ligand>
        <name>sn-glycerol 3-phosphate</name>
        <dbReference type="ChEBI" id="CHEBI:57597"/>
    </ligand>
</feature>
<feature type="binding site" evidence="1">
    <location>
        <position position="255"/>
    </location>
    <ligand>
        <name>NADPH</name>
        <dbReference type="ChEBI" id="CHEBI:57783"/>
    </ligand>
</feature>
<feature type="binding site" evidence="1">
    <location>
        <position position="255"/>
    </location>
    <ligand>
        <name>sn-glycerol 3-phosphate</name>
        <dbReference type="ChEBI" id="CHEBI:57597"/>
    </ligand>
</feature>
<feature type="binding site" evidence="1">
    <location>
        <position position="256"/>
    </location>
    <ligand>
        <name>sn-glycerol 3-phosphate</name>
        <dbReference type="ChEBI" id="CHEBI:57597"/>
    </ligand>
</feature>
<feature type="binding site" evidence="1">
    <location>
        <position position="279"/>
    </location>
    <ligand>
        <name>NADPH</name>
        <dbReference type="ChEBI" id="CHEBI:57783"/>
    </ligand>
</feature>
<feature type="binding site" evidence="1">
    <location>
        <position position="281"/>
    </location>
    <ligand>
        <name>NADPH</name>
        <dbReference type="ChEBI" id="CHEBI:57783"/>
    </ligand>
</feature>
<accession>Q48K59</accession>